<evidence type="ECO:0000250" key="1"/>
<evidence type="ECO:0000255" key="2"/>
<evidence type="ECO:0000269" key="3">
    <source>
    </source>
</evidence>
<evidence type="ECO:0000269" key="4">
    <source>
    </source>
</evidence>
<evidence type="ECO:0000269" key="5">
    <source>
    </source>
</evidence>
<evidence type="ECO:0000269" key="6">
    <source>
    </source>
</evidence>
<evidence type="ECO:0000305" key="7"/>
<evidence type="ECO:0007744" key="8">
    <source>
        <dbReference type="PDB" id="8B6L"/>
    </source>
</evidence>
<keyword id="KW-0002">3D-structure</keyword>
<keyword id="KW-0256">Endoplasmic reticulum</keyword>
<keyword id="KW-0325">Glycoprotein</keyword>
<keyword id="KW-0472">Membrane</keyword>
<keyword id="KW-1267">Proteomics identification</keyword>
<keyword id="KW-1185">Reference proteome</keyword>
<keyword id="KW-0732">Signal</keyword>
<keyword id="KW-0812">Transmembrane</keyword>
<keyword id="KW-1133">Transmembrane helix</keyword>
<protein>
    <recommendedName>
        <fullName>Translocon-associated protein subunit beta</fullName>
        <shortName>TRAP-beta</shortName>
    </recommendedName>
    <alternativeName>
        <fullName>Signal sequence receptor subunit beta</fullName>
        <shortName>SSR-beta</shortName>
    </alternativeName>
</protein>
<comment type="function">
    <text>TRAP proteins are part of a complex whose function is to bind calcium to the ER membrane and thereby regulate the retention of ER resident proteins.</text>
</comment>
<comment type="subunit">
    <text evidence="4 6">Heterotetramer of TRAP-alpha, TRAP-beta, TRAP-delta and TRAP-gamma. Interacts with STING1.</text>
</comment>
<comment type="interaction">
    <interactant intactId="EBI-2822012">
        <id>P43308</id>
    </interactant>
    <interactant intactId="EBI-2800345">
        <id>Q86WV6</id>
        <label>STING1</label>
    </interactant>
    <organismsDiffer>false</organismsDiffer>
    <experiments>4</experiments>
</comment>
<comment type="subcellular location">
    <subcellularLocation>
        <location>Endoplasmic reticulum membrane</location>
        <topology>Single-pass type I membrane protein</topology>
    </subcellularLocation>
</comment>
<comment type="similarity">
    <text evidence="7">Belongs to the TRAP-beta family.</text>
</comment>
<organism>
    <name type="scientific">Homo sapiens</name>
    <name type="common">Human</name>
    <dbReference type="NCBI Taxonomy" id="9606"/>
    <lineage>
        <taxon>Eukaryota</taxon>
        <taxon>Metazoa</taxon>
        <taxon>Chordata</taxon>
        <taxon>Craniata</taxon>
        <taxon>Vertebrata</taxon>
        <taxon>Euteleostomi</taxon>
        <taxon>Mammalia</taxon>
        <taxon>Eutheria</taxon>
        <taxon>Euarchontoglires</taxon>
        <taxon>Primates</taxon>
        <taxon>Haplorrhini</taxon>
        <taxon>Catarrhini</taxon>
        <taxon>Hominidae</taxon>
        <taxon>Homo</taxon>
    </lineage>
</organism>
<sequence length="183" mass="20135">MRLLSFVVLALFAVTQAEEGARLLASKSLLNRYAVEGRDLTLQYNIYNVGSSAALDVELSDDSFPPEDFGIVSGMLNVKWDRIAPASNVSHTVVLRPLKAGYFNFTSATITYLAQEDGPVVIGSTSAPGQGGILAQREFDRRFSPHFLDWAAFGVMTLPSIGIPLLLWYSSKRKYDTPKTKKN</sequence>
<accession>P43308</accession>
<accession>B2R9K9</accession>
<accession>D3DVA7</accession>
<accession>Q53HI0</accession>
<accession>Q5VY95</accession>
<accession>Q5VY96</accession>
<accession>Q6IB31</accession>
<accession>Q9BWE4</accession>
<reference key="1">
    <citation type="journal article" date="1994" name="Biochim. Biophys. Acta">
        <title>Cloning and sequence analysis of the beta subunit of the human translocon-associated protein.</title>
        <authorList>
            <person name="Bodescot M."/>
            <person name="Brison O."/>
        </authorList>
    </citation>
    <scope>NUCLEOTIDE SEQUENCE [MRNA]</scope>
    <source>
        <tissue>Colon carcinoma</tissue>
    </source>
</reference>
<reference key="2">
    <citation type="journal article" date="1995" name="Cytogenet. Cell Genet.">
        <title>Isolation and mapping of the human beta-signal sequence receptor gene (SSR2).</title>
        <authorList>
            <person name="Chinen K."/>
            <person name="Sudo K."/>
            <person name="Takahashi E."/>
            <person name="Nakamura Y."/>
        </authorList>
    </citation>
    <scope>NUCLEOTIDE SEQUENCE [MRNA]</scope>
    <source>
        <tissue>Lung</tissue>
    </source>
</reference>
<reference key="3">
    <citation type="submission" date="2003-03" db="EMBL/GenBank/DDBJ databases">
        <title>A new spermatogenesis-related gene.</title>
        <authorList>
            <person name="Wu N."/>
            <person name="Miao S.Y."/>
            <person name="Zhang X.D."/>
            <person name="Qiao Y."/>
            <person name="Liang G."/>
            <person name="Wang L.F."/>
        </authorList>
    </citation>
    <scope>NUCLEOTIDE SEQUENCE [LARGE SCALE MRNA]</scope>
    <source>
        <tissue>Testis</tissue>
    </source>
</reference>
<reference key="4">
    <citation type="submission" date="2004-06" db="EMBL/GenBank/DDBJ databases">
        <title>Cloning of human full open reading frames in Gateway(TM) system entry vector (pDONR201).</title>
        <authorList>
            <person name="Ebert L."/>
            <person name="Schick M."/>
            <person name="Neubert P."/>
            <person name="Schatten R."/>
            <person name="Henze S."/>
            <person name="Korn B."/>
        </authorList>
    </citation>
    <scope>NUCLEOTIDE SEQUENCE [LARGE SCALE MRNA]</scope>
</reference>
<reference key="5">
    <citation type="journal article" date="2004" name="Nat. Genet.">
        <title>Complete sequencing and characterization of 21,243 full-length human cDNAs.</title>
        <authorList>
            <person name="Ota T."/>
            <person name="Suzuki Y."/>
            <person name="Nishikawa T."/>
            <person name="Otsuki T."/>
            <person name="Sugiyama T."/>
            <person name="Irie R."/>
            <person name="Wakamatsu A."/>
            <person name="Hayashi K."/>
            <person name="Sato H."/>
            <person name="Nagai K."/>
            <person name="Kimura K."/>
            <person name="Makita H."/>
            <person name="Sekine M."/>
            <person name="Obayashi M."/>
            <person name="Nishi T."/>
            <person name="Shibahara T."/>
            <person name="Tanaka T."/>
            <person name="Ishii S."/>
            <person name="Yamamoto J."/>
            <person name="Saito K."/>
            <person name="Kawai Y."/>
            <person name="Isono Y."/>
            <person name="Nakamura Y."/>
            <person name="Nagahari K."/>
            <person name="Murakami K."/>
            <person name="Yasuda T."/>
            <person name="Iwayanagi T."/>
            <person name="Wagatsuma M."/>
            <person name="Shiratori A."/>
            <person name="Sudo H."/>
            <person name="Hosoiri T."/>
            <person name="Kaku Y."/>
            <person name="Kodaira H."/>
            <person name="Kondo H."/>
            <person name="Sugawara M."/>
            <person name="Takahashi M."/>
            <person name="Kanda K."/>
            <person name="Yokoi T."/>
            <person name="Furuya T."/>
            <person name="Kikkawa E."/>
            <person name="Omura Y."/>
            <person name="Abe K."/>
            <person name="Kamihara K."/>
            <person name="Katsuta N."/>
            <person name="Sato K."/>
            <person name="Tanikawa M."/>
            <person name="Yamazaki M."/>
            <person name="Ninomiya K."/>
            <person name="Ishibashi T."/>
            <person name="Yamashita H."/>
            <person name="Murakawa K."/>
            <person name="Fujimori K."/>
            <person name="Tanai H."/>
            <person name="Kimata M."/>
            <person name="Watanabe M."/>
            <person name="Hiraoka S."/>
            <person name="Chiba Y."/>
            <person name="Ishida S."/>
            <person name="Ono Y."/>
            <person name="Takiguchi S."/>
            <person name="Watanabe S."/>
            <person name="Yosida M."/>
            <person name="Hotuta T."/>
            <person name="Kusano J."/>
            <person name="Kanehori K."/>
            <person name="Takahashi-Fujii A."/>
            <person name="Hara H."/>
            <person name="Tanase T.-O."/>
            <person name="Nomura Y."/>
            <person name="Togiya S."/>
            <person name="Komai F."/>
            <person name="Hara R."/>
            <person name="Takeuchi K."/>
            <person name="Arita M."/>
            <person name="Imose N."/>
            <person name="Musashino K."/>
            <person name="Yuuki H."/>
            <person name="Oshima A."/>
            <person name="Sasaki N."/>
            <person name="Aotsuka S."/>
            <person name="Yoshikawa Y."/>
            <person name="Matsunawa H."/>
            <person name="Ichihara T."/>
            <person name="Shiohata N."/>
            <person name="Sano S."/>
            <person name="Moriya S."/>
            <person name="Momiyama H."/>
            <person name="Satoh N."/>
            <person name="Takami S."/>
            <person name="Terashima Y."/>
            <person name="Suzuki O."/>
            <person name="Nakagawa S."/>
            <person name="Senoh A."/>
            <person name="Mizoguchi H."/>
            <person name="Goto Y."/>
            <person name="Shimizu F."/>
            <person name="Wakebe H."/>
            <person name="Hishigaki H."/>
            <person name="Watanabe T."/>
            <person name="Sugiyama A."/>
            <person name="Takemoto M."/>
            <person name="Kawakami B."/>
            <person name="Yamazaki M."/>
            <person name="Watanabe K."/>
            <person name="Kumagai A."/>
            <person name="Itakura S."/>
            <person name="Fukuzumi Y."/>
            <person name="Fujimori Y."/>
            <person name="Komiyama M."/>
            <person name="Tashiro H."/>
            <person name="Tanigami A."/>
            <person name="Fujiwara T."/>
            <person name="Ono T."/>
            <person name="Yamada K."/>
            <person name="Fujii Y."/>
            <person name="Ozaki K."/>
            <person name="Hirao M."/>
            <person name="Ohmori Y."/>
            <person name="Kawabata A."/>
            <person name="Hikiji T."/>
            <person name="Kobatake N."/>
            <person name="Inagaki H."/>
            <person name="Ikema Y."/>
            <person name="Okamoto S."/>
            <person name="Okitani R."/>
            <person name="Kawakami T."/>
            <person name="Noguchi S."/>
            <person name="Itoh T."/>
            <person name="Shigeta K."/>
            <person name="Senba T."/>
            <person name="Matsumura K."/>
            <person name="Nakajima Y."/>
            <person name="Mizuno T."/>
            <person name="Morinaga M."/>
            <person name="Sasaki M."/>
            <person name="Togashi T."/>
            <person name="Oyama M."/>
            <person name="Hata H."/>
            <person name="Watanabe M."/>
            <person name="Komatsu T."/>
            <person name="Mizushima-Sugano J."/>
            <person name="Satoh T."/>
            <person name="Shirai Y."/>
            <person name="Takahashi Y."/>
            <person name="Nakagawa K."/>
            <person name="Okumura K."/>
            <person name="Nagase T."/>
            <person name="Nomura N."/>
            <person name="Kikuchi H."/>
            <person name="Masuho Y."/>
            <person name="Yamashita R."/>
            <person name="Nakai K."/>
            <person name="Yada T."/>
            <person name="Nakamura Y."/>
            <person name="Ohara O."/>
            <person name="Isogai T."/>
            <person name="Sugano S."/>
        </authorList>
    </citation>
    <scope>NUCLEOTIDE SEQUENCE [LARGE SCALE MRNA]</scope>
    <source>
        <tissue>Brain</tissue>
    </source>
</reference>
<reference key="6">
    <citation type="submission" date="2005-04" db="EMBL/GenBank/DDBJ databases">
        <authorList>
            <person name="Suzuki Y."/>
            <person name="Sugano S."/>
            <person name="Totoki Y."/>
            <person name="Toyoda A."/>
            <person name="Takeda T."/>
            <person name="Sakaki Y."/>
            <person name="Tanaka A."/>
            <person name="Yokoyama S."/>
        </authorList>
    </citation>
    <scope>NUCLEOTIDE SEQUENCE [LARGE SCALE MRNA]</scope>
    <source>
        <tissue>Coronary artery</tissue>
    </source>
</reference>
<reference key="7">
    <citation type="journal article" date="2006" name="Nature">
        <title>The DNA sequence and biological annotation of human chromosome 1.</title>
        <authorList>
            <person name="Gregory S.G."/>
            <person name="Barlow K.F."/>
            <person name="McLay K.E."/>
            <person name="Kaul R."/>
            <person name="Swarbreck D."/>
            <person name="Dunham A."/>
            <person name="Scott C.E."/>
            <person name="Howe K.L."/>
            <person name="Woodfine K."/>
            <person name="Spencer C.C.A."/>
            <person name="Jones M.C."/>
            <person name="Gillson C."/>
            <person name="Searle S."/>
            <person name="Zhou Y."/>
            <person name="Kokocinski F."/>
            <person name="McDonald L."/>
            <person name="Evans R."/>
            <person name="Phillips K."/>
            <person name="Atkinson A."/>
            <person name="Cooper R."/>
            <person name="Jones C."/>
            <person name="Hall R.E."/>
            <person name="Andrews T.D."/>
            <person name="Lloyd C."/>
            <person name="Ainscough R."/>
            <person name="Almeida J.P."/>
            <person name="Ambrose K.D."/>
            <person name="Anderson F."/>
            <person name="Andrew R.W."/>
            <person name="Ashwell R.I.S."/>
            <person name="Aubin K."/>
            <person name="Babbage A.K."/>
            <person name="Bagguley C.L."/>
            <person name="Bailey J."/>
            <person name="Beasley H."/>
            <person name="Bethel G."/>
            <person name="Bird C.P."/>
            <person name="Bray-Allen S."/>
            <person name="Brown J.Y."/>
            <person name="Brown A.J."/>
            <person name="Buckley D."/>
            <person name="Burton J."/>
            <person name="Bye J."/>
            <person name="Carder C."/>
            <person name="Chapman J.C."/>
            <person name="Clark S.Y."/>
            <person name="Clarke G."/>
            <person name="Clee C."/>
            <person name="Cobley V."/>
            <person name="Collier R.E."/>
            <person name="Corby N."/>
            <person name="Coville G.J."/>
            <person name="Davies J."/>
            <person name="Deadman R."/>
            <person name="Dunn M."/>
            <person name="Earthrowl M."/>
            <person name="Ellington A.G."/>
            <person name="Errington H."/>
            <person name="Frankish A."/>
            <person name="Frankland J."/>
            <person name="French L."/>
            <person name="Garner P."/>
            <person name="Garnett J."/>
            <person name="Gay L."/>
            <person name="Ghori M.R.J."/>
            <person name="Gibson R."/>
            <person name="Gilby L.M."/>
            <person name="Gillett W."/>
            <person name="Glithero R.J."/>
            <person name="Grafham D.V."/>
            <person name="Griffiths C."/>
            <person name="Griffiths-Jones S."/>
            <person name="Grocock R."/>
            <person name="Hammond S."/>
            <person name="Harrison E.S.I."/>
            <person name="Hart E."/>
            <person name="Haugen E."/>
            <person name="Heath P.D."/>
            <person name="Holmes S."/>
            <person name="Holt K."/>
            <person name="Howden P.J."/>
            <person name="Hunt A.R."/>
            <person name="Hunt S.E."/>
            <person name="Hunter G."/>
            <person name="Isherwood J."/>
            <person name="James R."/>
            <person name="Johnson C."/>
            <person name="Johnson D."/>
            <person name="Joy A."/>
            <person name="Kay M."/>
            <person name="Kershaw J.K."/>
            <person name="Kibukawa M."/>
            <person name="Kimberley A.M."/>
            <person name="King A."/>
            <person name="Knights A.J."/>
            <person name="Lad H."/>
            <person name="Laird G."/>
            <person name="Lawlor S."/>
            <person name="Leongamornlert D.A."/>
            <person name="Lloyd D.M."/>
            <person name="Loveland J."/>
            <person name="Lovell J."/>
            <person name="Lush M.J."/>
            <person name="Lyne R."/>
            <person name="Martin S."/>
            <person name="Mashreghi-Mohammadi M."/>
            <person name="Matthews L."/>
            <person name="Matthews N.S.W."/>
            <person name="McLaren S."/>
            <person name="Milne S."/>
            <person name="Mistry S."/>
            <person name="Moore M.J.F."/>
            <person name="Nickerson T."/>
            <person name="O'Dell C.N."/>
            <person name="Oliver K."/>
            <person name="Palmeiri A."/>
            <person name="Palmer S.A."/>
            <person name="Parker A."/>
            <person name="Patel D."/>
            <person name="Pearce A.V."/>
            <person name="Peck A.I."/>
            <person name="Pelan S."/>
            <person name="Phelps K."/>
            <person name="Phillimore B.J."/>
            <person name="Plumb R."/>
            <person name="Rajan J."/>
            <person name="Raymond C."/>
            <person name="Rouse G."/>
            <person name="Saenphimmachak C."/>
            <person name="Sehra H.K."/>
            <person name="Sheridan E."/>
            <person name="Shownkeen R."/>
            <person name="Sims S."/>
            <person name="Skuce C.D."/>
            <person name="Smith M."/>
            <person name="Steward C."/>
            <person name="Subramanian S."/>
            <person name="Sycamore N."/>
            <person name="Tracey A."/>
            <person name="Tromans A."/>
            <person name="Van Helmond Z."/>
            <person name="Wall M."/>
            <person name="Wallis J.M."/>
            <person name="White S."/>
            <person name="Whitehead S.L."/>
            <person name="Wilkinson J.E."/>
            <person name="Willey D.L."/>
            <person name="Williams H."/>
            <person name="Wilming L."/>
            <person name="Wray P.W."/>
            <person name="Wu Z."/>
            <person name="Coulson A."/>
            <person name="Vaudin M."/>
            <person name="Sulston J.E."/>
            <person name="Durbin R.M."/>
            <person name="Hubbard T."/>
            <person name="Wooster R."/>
            <person name="Dunham I."/>
            <person name="Carter N.P."/>
            <person name="McVean G."/>
            <person name="Ross M.T."/>
            <person name="Harrow J."/>
            <person name="Olson M.V."/>
            <person name="Beck S."/>
            <person name="Rogers J."/>
            <person name="Bentley D.R."/>
        </authorList>
    </citation>
    <scope>NUCLEOTIDE SEQUENCE [LARGE SCALE GENOMIC DNA]</scope>
</reference>
<reference key="8">
    <citation type="submission" date="2005-09" db="EMBL/GenBank/DDBJ databases">
        <authorList>
            <person name="Mural R.J."/>
            <person name="Istrail S."/>
            <person name="Sutton G.G."/>
            <person name="Florea L."/>
            <person name="Halpern A.L."/>
            <person name="Mobarry C.M."/>
            <person name="Lippert R."/>
            <person name="Walenz B."/>
            <person name="Shatkay H."/>
            <person name="Dew I."/>
            <person name="Miller J.R."/>
            <person name="Flanigan M.J."/>
            <person name="Edwards N.J."/>
            <person name="Bolanos R."/>
            <person name="Fasulo D."/>
            <person name="Halldorsson B.V."/>
            <person name="Hannenhalli S."/>
            <person name="Turner R."/>
            <person name="Yooseph S."/>
            <person name="Lu F."/>
            <person name="Nusskern D.R."/>
            <person name="Shue B.C."/>
            <person name="Zheng X.H."/>
            <person name="Zhong F."/>
            <person name="Delcher A.L."/>
            <person name="Huson D.H."/>
            <person name="Kravitz S.A."/>
            <person name="Mouchard L."/>
            <person name="Reinert K."/>
            <person name="Remington K.A."/>
            <person name="Clark A.G."/>
            <person name="Waterman M.S."/>
            <person name="Eichler E.E."/>
            <person name="Adams M.D."/>
            <person name="Hunkapiller M.W."/>
            <person name="Myers E.W."/>
            <person name="Venter J.C."/>
        </authorList>
    </citation>
    <scope>NUCLEOTIDE SEQUENCE [LARGE SCALE GENOMIC DNA]</scope>
</reference>
<reference key="9">
    <citation type="journal article" date="2004" name="Genome Res.">
        <title>The status, quality, and expansion of the NIH full-length cDNA project: the Mammalian Gene Collection (MGC).</title>
        <authorList>
            <consortium name="The MGC Project Team"/>
        </authorList>
    </citation>
    <scope>NUCLEOTIDE SEQUENCE [LARGE SCALE MRNA]</scope>
    <source>
        <tissue>Lung</tissue>
    </source>
</reference>
<reference key="10">
    <citation type="journal article" date="2003" name="Nat. Biotechnol.">
        <title>Identification and quantification of N-linked glycoproteins using hydrazide chemistry, stable isotope labeling and mass spectrometry.</title>
        <authorList>
            <person name="Zhang H."/>
            <person name="Li X.-J."/>
            <person name="Martin D.B."/>
            <person name="Aebersold R."/>
        </authorList>
    </citation>
    <scope>GLYCOSYLATION AT ASN-88 AND ASN-104</scope>
</reference>
<reference key="11">
    <citation type="journal article" date="2008" name="Nature">
        <title>STING is an endoplasmic reticulum adaptor that facilitates innate immune signalling.</title>
        <authorList>
            <person name="Ishikawa H."/>
            <person name="Barber G.N."/>
        </authorList>
    </citation>
    <scope>INTERACTION WITH STING1</scope>
</reference>
<reference key="12">
    <citation type="journal article" date="2009" name="J. Proteome Res.">
        <title>Glycoproteomics analysis of human liver tissue by combination of multiple enzyme digestion and hydrazide chemistry.</title>
        <authorList>
            <person name="Chen R."/>
            <person name="Jiang X."/>
            <person name="Sun D."/>
            <person name="Han G."/>
            <person name="Wang F."/>
            <person name="Ye M."/>
            <person name="Wang L."/>
            <person name="Zou H."/>
        </authorList>
    </citation>
    <scope>GLYCOSYLATION [LARGE SCALE ANALYSIS] AT ASN-88 AND ASN-104</scope>
    <source>
        <tissue>Liver</tissue>
    </source>
</reference>
<reference key="13">
    <citation type="journal article" date="2015" name="Proteomics">
        <title>N-terminome analysis of the human mitochondrial proteome.</title>
        <authorList>
            <person name="Vaca Jacome A.S."/>
            <person name="Rabilloud T."/>
            <person name="Schaeffer-Reiss C."/>
            <person name="Rompais M."/>
            <person name="Ayoub D."/>
            <person name="Lane L."/>
            <person name="Bairoch A."/>
            <person name="Van Dorsselaer A."/>
            <person name="Carapito C."/>
        </authorList>
    </citation>
    <scope>IDENTIFICATION BY MASS SPECTROMETRY [LARGE SCALE ANALYSIS]</scope>
</reference>
<reference evidence="8" key="14">
    <citation type="journal article" date="2023" name="Nature">
        <title>Visualization of translation and protein biogenesis at the ER membrane.</title>
        <authorList>
            <person name="Gemmer M."/>
            <person name="Chaillet M.L."/>
            <person name="van Loenhout J."/>
            <person name="Cuevas Arenas R."/>
            <person name="Vismpas D."/>
            <person name="Grollers-Mulderij M."/>
            <person name="Koh F.A."/>
            <person name="Albanese P."/>
            <person name="Scheltema R.A."/>
            <person name="Howes S.C."/>
            <person name="Kotecha A."/>
            <person name="Fedry J."/>
            <person name="Forster F."/>
        </authorList>
    </citation>
    <scope>STRUCTURE BY ELECTRON MICROSCOPY (7.60 ANGSTROMS) OF THE STT3A-CONTAINING OLIGOSACCHARYLTRANSFERASE (OST) AND TRANSLOCON COMPLEXES</scope>
    <scope>SUBUNIT</scope>
</reference>
<feature type="signal peptide" evidence="1">
    <location>
        <begin position="1"/>
        <end position="17"/>
    </location>
</feature>
<feature type="chain" id="PRO_0000033290" description="Translocon-associated protein subunit beta">
    <location>
        <begin position="18"/>
        <end position="183"/>
    </location>
</feature>
<feature type="topological domain" description="Lumenal" evidence="2">
    <location>
        <begin position="18"/>
        <end position="149"/>
    </location>
</feature>
<feature type="transmembrane region" description="Helical" evidence="2">
    <location>
        <begin position="150"/>
        <end position="169"/>
    </location>
</feature>
<feature type="topological domain" description="Cytoplasmic" evidence="2">
    <location>
        <begin position="170"/>
        <end position="183"/>
    </location>
</feature>
<feature type="glycosylation site" description="N-linked (GlcNAc...) asparagine" evidence="3 5">
    <location>
        <position position="88"/>
    </location>
</feature>
<feature type="glycosylation site" description="N-linked (GlcNAc...) asparagine" evidence="3 5">
    <location>
        <position position="104"/>
    </location>
</feature>
<feature type="sequence conflict" description="In Ref. 6; BAD96320." evidence="7" ref="6">
    <original>I</original>
    <variation>T</variation>
    <location>
        <position position="46"/>
    </location>
</feature>
<proteinExistence type="evidence at protein level"/>
<gene>
    <name type="primary">SSR2</name>
    <name type="synonym">TRAPB</name>
    <name type="ORF">HSD25</name>
</gene>
<name>SSRB_HUMAN</name>
<dbReference type="EMBL" id="X74104">
    <property type="protein sequence ID" value="CAA52207.1"/>
    <property type="molecule type" value="mRNA"/>
</dbReference>
<dbReference type="EMBL" id="D37991">
    <property type="protein sequence ID" value="BAA07206.1"/>
    <property type="molecule type" value="mRNA"/>
</dbReference>
<dbReference type="EMBL" id="AY251536">
    <property type="protein sequence ID" value="AAP20059.1"/>
    <property type="molecule type" value="mRNA"/>
</dbReference>
<dbReference type="EMBL" id="CR456973">
    <property type="protein sequence ID" value="CAG33254.1"/>
    <property type="molecule type" value="mRNA"/>
</dbReference>
<dbReference type="EMBL" id="AK222600">
    <property type="protein sequence ID" value="BAD96320.1"/>
    <property type="molecule type" value="mRNA"/>
</dbReference>
<dbReference type="EMBL" id="AK313821">
    <property type="protein sequence ID" value="BAG36556.1"/>
    <property type="molecule type" value="mRNA"/>
</dbReference>
<dbReference type="EMBL" id="AL355388">
    <property type="status" value="NOT_ANNOTATED_CDS"/>
    <property type="molecule type" value="Genomic_DNA"/>
</dbReference>
<dbReference type="EMBL" id="CH471121">
    <property type="protein sequence ID" value="EAW53010.1"/>
    <property type="molecule type" value="Genomic_DNA"/>
</dbReference>
<dbReference type="EMBL" id="CH471121">
    <property type="protein sequence ID" value="EAW53011.1"/>
    <property type="molecule type" value="Genomic_DNA"/>
</dbReference>
<dbReference type="EMBL" id="BC000341">
    <property type="protein sequence ID" value="AAH00341.2"/>
    <property type="molecule type" value="mRNA"/>
</dbReference>
<dbReference type="CCDS" id="CCDS1126.1"/>
<dbReference type="PIR" id="S41063">
    <property type="entry name" value="S41063"/>
</dbReference>
<dbReference type="RefSeq" id="NP_003136.1">
    <property type="nucleotide sequence ID" value="NM_003145.4"/>
</dbReference>
<dbReference type="PDB" id="8B6L">
    <property type="method" value="EM"/>
    <property type="resolution" value="7.60 A"/>
    <property type="chains" value="F=1-183"/>
</dbReference>
<dbReference type="PDBsum" id="8B6L"/>
<dbReference type="EMDB" id="EMD-15870"/>
<dbReference type="SMR" id="P43308"/>
<dbReference type="BioGRID" id="112624">
    <property type="interactions" value="224"/>
</dbReference>
<dbReference type="ComplexPortal" id="CPX-8024">
    <property type="entry name" value="Translocon-associated protein complex"/>
</dbReference>
<dbReference type="DIP" id="DIP-60652N"/>
<dbReference type="FunCoup" id="P43308">
    <property type="interactions" value="1204"/>
</dbReference>
<dbReference type="IntAct" id="P43308">
    <property type="interactions" value="42"/>
</dbReference>
<dbReference type="MINT" id="P43308"/>
<dbReference type="STRING" id="9606.ENSP00000295702"/>
<dbReference type="TCDB" id="8.A.191.1.1">
    <property type="family name" value="the translocon-associated protein subunit beta (tps-beta) family"/>
</dbReference>
<dbReference type="GlyConnect" id="1840">
    <property type="glycosylation" value="11 N-Linked glycans (2 sites)"/>
</dbReference>
<dbReference type="GlyCosmos" id="P43308">
    <property type="glycosylation" value="4 sites, 13 glycans"/>
</dbReference>
<dbReference type="GlyGen" id="P43308">
    <property type="glycosylation" value="4 sites, 23 N-linked glycans (2 sites), 1 O-linked glycan (2 sites)"/>
</dbReference>
<dbReference type="iPTMnet" id="P43308"/>
<dbReference type="PhosphoSitePlus" id="P43308"/>
<dbReference type="BioMuta" id="SSR2"/>
<dbReference type="DMDM" id="1174451"/>
<dbReference type="jPOST" id="P43308"/>
<dbReference type="MassIVE" id="P43308"/>
<dbReference type="PaxDb" id="9606-ENSP00000295702"/>
<dbReference type="PeptideAtlas" id="P43308"/>
<dbReference type="ProteomicsDB" id="55611"/>
<dbReference type="TopDownProteomics" id="P43308"/>
<dbReference type="Antibodypedia" id="20426">
    <property type="antibodies" value="185 antibodies from 26 providers"/>
</dbReference>
<dbReference type="DNASU" id="6746"/>
<dbReference type="Ensembl" id="ENST00000295702.9">
    <property type="protein sequence ID" value="ENSP00000295702.4"/>
    <property type="gene ID" value="ENSG00000163479.14"/>
</dbReference>
<dbReference type="Ensembl" id="ENST00000480567.5">
    <property type="protein sequence ID" value="ENSP00000434306.1"/>
    <property type="gene ID" value="ENSG00000163479.14"/>
</dbReference>
<dbReference type="GeneID" id="6746"/>
<dbReference type="KEGG" id="hsa:6746"/>
<dbReference type="MANE-Select" id="ENST00000295702.9">
    <property type="protein sequence ID" value="ENSP00000295702.4"/>
    <property type="RefSeq nucleotide sequence ID" value="NM_003145.4"/>
    <property type="RefSeq protein sequence ID" value="NP_003136.1"/>
</dbReference>
<dbReference type="UCSC" id="uc001fmx.4">
    <property type="organism name" value="human"/>
</dbReference>
<dbReference type="AGR" id="HGNC:11324"/>
<dbReference type="CTD" id="6746"/>
<dbReference type="DisGeNET" id="6746"/>
<dbReference type="GeneCards" id="SSR2"/>
<dbReference type="HGNC" id="HGNC:11324">
    <property type="gene designation" value="SSR2"/>
</dbReference>
<dbReference type="HPA" id="ENSG00000163479">
    <property type="expression patterns" value="Low tissue specificity"/>
</dbReference>
<dbReference type="MIM" id="600867">
    <property type="type" value="gene"/>
</dbReference>
<dbReference type="neXtProt" id="NX_P43308"/>
<dbReference type="OpenTargets" id="ENSG00000163479"/>
<dbReference type="PharmGKB" id="PA36148"/>
<dbReference type="VEuPathDB" id="HostDB:ENSG00000163479"/>
<dbReference type="eggNOG" id="KOG3317">
    <property type="taxonomic scope" value="Eukaryota"/>
</dbReference>
<dbReference type="GeneTree" id="ENSGT00390000005125"/>
<dbReference type="HOGENOM" id="CLU_102025_1_0_1"/>
<dbReference type="InParanoid" id="P43308"/>
<dbReference type="OMA" id="ILWHSSK"/>
<dbReference type="OrthoDB" id="5860827at2759"/>
<dbReference type="PAN-GO" id="P43308">
    <property type="GO annotations" value="0 GO annotations based on evolutionary models"/>
</dbReference>
<dbReference type="PhylomeDB" id="P43308"/>
<dbReference type="TreeFam" id="TF314461"/>
<dbReference type="PathwayCommons" id="P43308"/>
<dbReference type="Reactome" id="R-HSA-1799339">
    <property type="pathway name" value="SRP-dependent cotranslational protein targeting to membrane"/>
</dbReference>
<dbReference type="SignaLink" id="P43308"/>
<dbReference type="BioGRID-ORCS" id="6746">
    <property type="hits" value="65 hits in 1178 CRISPR screens"/>
</dbReference>
<dbReference type="ChiTaRS" id="SSR2">
    <property type="organism name" value="human"/>
</dbReference>
<dbReference type="GeneWiki" id="SSR2"/>
<dbReference type="GenomeRNAi" id="6746"/>
<dbReference type="Pharos" id="P43308">
    <property type="development level" value="Tbio"/>
</dbReference>
<dbReference type="PRO" id="PR:P43308"/>
<dbReference type="Proteomes" id="UP000005640">
    <property type="component" value="Chromosome 1"/>
</dbReference>
<dbReference type="RNAct" id="P43308">
    <property type="molecule type" value="protein"/>
</dbReference>
<dbReference type="Bgee" id="ENSG00000163479">
    <property type="expression patterns" value="Expressed in body of pancreas and 214 other cell types or tissues"/>
</dbReference>
<dbReference type="ExpressionAtlas" id="P43308">
    <property type="expression patterns" value="baseline and differential"/>
</dbReference>
<dbReference type="GO" id="GO:0005783">
    <property type="term" value="C:endoplasmic reticulum"/>
    <property type="evidence" value="ECO:0000304"/>
    <property type="project" value="ProtInc"/>
</dbReference>
<dbReference type="GO" id="GO:0005789">
    <property type="term" value="C:endoplasmic reticulum membrane"/>
    <property type="evidence" value="ECO:0007669"/>
    <property type="project" value="UniProtKB-SubCell"/>
</dbReference>
<dbReference type="GO" id="GO:0016020">
    <property type="term" value="C:membrane"/>
    <property type="evidence" value="ECO:0000304"/>
    <property type="project" value="ProtInc"/>
</dbReference>
<dbReference type="GO" id="GO:0006613">
    <property type="term" value="P:cotranslational protein targeting to membrane"/>
    <property type="evidence" value="ECO:0000304"/>
    <property type="project" value="ProtInc"/>
</dbReference>
<dbReference type="GO" id="GO:0001701">
    <property type="term" value="P:in utero embryonic development"/>
    <property type="evidence" value="ECO:0007669"/>
    <property type="project" value="Ensembl"/>
</dbReference>
<dbReference type="InterPro" id="IPR008856">
    <property type="entry name" value="TRAP_beta"/>
</dbReference>
<dbReference type="PANTHER" id="PTHR12861:SF3">
    <property type="entry name" value="TRANSLOCON-ASSOCIATED PROTEIN SUBUNIT BETA"/>
    <property type="match status" value="1"/>
</dbReference>
<dbReference type="PANTHER" id="PTHR12861">
    <property type="entry name" value="TRANSLOCON-ASSOCIATED PROTEIN, BETA SUBUNIT PRECURSOR TRAP-BETA SIGNAL SEQUENCE RECEPTOR BETA SUBUNIT"/>
    <property type="match status" value="1"/>
</dbReference>
<dbReference type="Pfam" id="PF05753">
    <property type="entry name" value="TRAP_beta"/>
    <property type="match status" value="1"/>
</dbReference>
<dbReference type="PIRSF" id="PIRSF016400">
    <property type="entry name" value="TRAP_beta"/>
    <property type="match status" value="1"/>
</dbReference>